<protein>
    <recommendedName>
        <fullName evidence="3">Alpha-amylase inhibitor helianthamide</fullName>
    </recommendedName>
</protein>
<name>IAA1_STIHL</name>
<evidence type="ECO:0000250" key="1">
    <source>
        <dbReference type="UniProtKB" id="C0HK71"/>
    </source>
</evidence>
<evidence type="ECO:0000269" key="2">
    <source>
    </source>
</evidence>
<evidence type="ECO:0000303" key="3">
    <source>
    </source>
</evidence>
<evidence type="ECO:0000305" key="4"/>
<evidence type="ECO:0000305" key="5">
    <source>
    </source>
</evidence>
<evidence type="ECO:0007744" key="6">
    <source>
        <dbReference type="PDB" id="4X0N"/>
    </source>
</evidence>
<evidence type="ECO:0007829" key="7">
    <source>
        <dbReference type="PDB" id="4X0N"/>
    </source>
</evidence>
<accession>A0A0X1KGZ5</accession>
<feature type="chain" id="PRO_0000454102" description="Alpha-amylase inhibitor helianthamide" evidence="2">
    <location>
        <begin position="1"/>
        <end position="44"/>
    </location>
</feature>
<feature type="region of interest" description="Inhibitory motif" evidence="2">
    <location>
        <begin position="7"/>
        <end position="10"/>
    </location>
</feature>
<feature type="disulfide bond" evidence="2 6">
    <location>
        <begin position="6"/>
        <end position="38"/>
    </location>
</feature>
<feature type="disulfide bond" evidence="2 6">
    <location>
        <begin position="16"/>
        <end position="33"/>
    </location>
</feature>
<feature type="disulfide bond" evidence="2 6">
    <location>
        <begin position="20"/>
        <end position="39"/>
    </location>
</feature>
<feature type="strand" evidence="7">
    <location>
        <begin position="6"/>
        <end position="9"/>
    </location>
</feature>
<feature type="strand" evidence="7">
    <location>
        <begin position="12"/>
        <end position="19"/>
    </location>
</feature>
<feature type="strand" evidence="7">
    <location>
        <begin position="25"/>
        <end position="28"/>
    </location>
</feature>
<feature type="helix" evidence="7">
    <location>
        <begin position="31"/>
        <end position="33"/>
    </location>
</feature>
<feature type="strand" evidence="7">
    <location>
        <begin position="36"/>
        <end position="40"/>
    </location>
</feature>
<organism>
    <name type="scientific">Stichodactyla helianthus</name>
    <name type="common">Sun anemone</name>
    <name type="synonym">Stoichactis helianthus</name>
    <dbReference type="NCBI Taxonomy" id="6123"/>
    <lineage>
        <taxon>Eukaryota</taxon>
        <taxon>Metazoa</taxon>
        <taxon>Cnidaria</taxon>
        <taxon>Anthozoa</taxon>
        <taxon>Hexacorallia</taxon>
        <taxon>Actiniaria</taxon>
        <taxon>Stichodactylidae</taxon>
        <taxon>Stichodactyla</taxon>
    </lineage>
</organism>
<comment type="function">
    <text evidence="2">Specific pancreatic alpha-amylase (AMY2A) inhibitor. The recombinant peptide inhibits human pancreatic (Ki=0.01 nM) and porcine pancreatic alpha-amylases (Ki=0.1 nM).</text>
</comment>
<comment type="subcellular location">
    <subcellularLocation>
        <location evidence="1">Secreted</location>
    </subcellularLocation>
</comment>
<comment type="domain">
    <text evidence="5">Is structurally homologous to beta-defensins.</text>
</comment>
<comment type="pharmaceutical">
    <text evidence="4">Potential drug candidate for the treatment of the type 2 diabetes mellitus.</text>
</comment>
<comment type="similarity">
    <text evidence="4">Belongs to the sea anemone alpha-amylase inhibitor family.</text>
</comment>
<reference key="1">
    <citation type="journal article" date="2016" name="ACS Cent. Sci.">
        <title>Potent human alpha-amylase inhibition by the beta-defensin-like protein helianthamide.</title>
        <authorList>
            <person name="Tysoe C."/>
            <person name="Williams L.K."/>
            <person name="Keyzers R."/>
            <person name="Nguyen N.T."/>
            <person name="Tarling C."/>
            <person name="Wicki J."/>
            <person name="Goddard-Borger E.D."/>
            <person name="Aguda A.H."/>
            <person name="Perry S."/>
            <person name="Foster L.J."/>
            <person name="Andersen R.J."/>
            <person name="Brayer G.D."/>
            <person name="Withers S.G."/>
        </authorList>
    </citation>
    <scope>PROTEIN SEQUENCE</scope>
    <scope>FUNCTION</scope>
    <scope>DISULFIDE BONDS</scope>
    <scope>RECOMBINANT EXPRESSION</scope>
    <scope>X-RAY CRYSTALLOGRAPHY (2.60 ANGSTROMS) IN COMPLEX WITH PORCINE PANCREATIC ALPHA-AMYLASE</scope>
</reference>
<sequence>ESGNSCYIYHGVSGICKASCAEDEKAMAGMGVCEGHLCCYKTPW</sequence>
<keyword id="KW-0002">3D-structure</keyword>
<keyword id="KW-0022">Alpha-amylase inhibitor</keyword>
<keyword id="KW-0903">Direct protein sequencing</keyword>
<keyword id="KW-1015">Disulfide bond</keyword>
<keyword id="KW-0582">Pharmaceutical</keyword>
<keyword id="KW-0964">Secreted</keyword>
<proteinExistence type="evidence at protein level"/>
<dbReference type="PDB" id="4X0N">
    <property type="method" value="X-ray"/>
    <property type="resolution" value="2.60 A"/>
    <property type="chains" value="B=1-44"/>
</dbReference>
<dbReference type="PDBsum" id="4X0N"/>
<dbReference type="SMR" id="A0A0X1KGZ5"/>
<dbReference type="GO" id="GO:0005576">
    <property type="term" value="C:extracellular region"/>
    <property type="evidence" value="ECO:0007669"/>
    <property type="project" value="UniProtKB-SubCell"/>
</dbReference>
<dbReference type="GO" id="GO:0015066">
    <property type="term" value="F:alpha-amylase inhibitor activity"/>
    <property type="evidence" value="ECO:0007669"/>
    <property type="project" value="UniProtKB-KW"/>
</dbReference>